<proteinExistence type="evidence at protein level"/>
<accession>Q9X1P7</accession>
<protein>
    <recommendedName>
        <fullName evidence="1">Queuine tRNA-ribosyltransferase</fullName>
        <ecNumber evidence="1">2.4.2.29</ecNumber>
    </recommendedName>
    <alternativeName>
        <fullName evidence="1">Guanine insertion enzyme</fullName>
    </alternativeName>
    <alternativeName>
        <fullName evidence="1">tRNA-guanine transglycosylase</fullName>
    </alternativeName>
</protein>
<keyword id="KW-0002">3D-structure</keyword>
<keyword id="KW-0328">Glycosyltransferase</keyword>
<keyword id="KW-0479">Metal-binding</keyword>
<keyword id="KW-0671">Queuosine biosynthesis</keyword>
<keyword id="KW-1185">Reference proteome</keyword>
<keyword id="KW-0808">Transferase</keyword>
<keyword id="KW-0819">tRNA processing</keyword>
<keyword id="KW-0862">Zinc</keyword>
<name>TGT_THEMA</name>
<comment type="function">
    <text evidence="1">Catalyzes the base-exchange of a guanine (G) residue with the queuine precursor 7-aminomethyl-7-deazaguanine (PreQ1) at position 34 (anticodon wobble position) in tRNAs with GU(N) anticodons (tRNA-Asp, -Asn, -His and -Tyr). Catalysis occurs through a double-displacement mechanism. The nucleophile active site attacks the C1' of nucleotide 34 to detach the guanine base from the RNA, forming a covalent enzyme-RNA intermediate. The proton acceptor active site deprotonates the incoming PreQ1, allowing a nucleophilic attack on the C1' of the ribose to form the product. After dissociation, two additional enzymatic reactions on the tRNA convert PreQ1 to queuine (Q), resulting in the hypermodified nucleoside queuosine (7-(((4,5-cis-dihydroxy-2-cyclopenten-1-yl)amino)methyl)-7-deazaguanosine).</text>
</comment>
<comment type="catalytic activity">
    <reaction evidence="1">
        <text>7-aminomethyl-7-carbaguanine + guanosine(34) in tRNA = 7-aminomethyl-7-carbaguanosine(34) in tRNA + guanine</text>
        <dbReference type="Rhea" id="RHEA:24104"/>
        <dbReference type="Rhea" id="RHEA-COMP:10341"/>
        <dbReference type="Rhea" id="RHEA-COMP:10342"/>
        <dbReference type="ChEBI" id="CHEBI:16235"/>
        <dbReference type="ChEBI" id="CHEBI:58703"/>
        <dbReference type="ChEBI" id="CHEBI:74269"/>
        <dbReference type="ChEBI" id="CHEBI:82833"/>
        <dbReference type="EC" id="2.4.2.29"/>
    </reaction>
</comment>
<comment type="cofactor">
    <cofactor evidence="1">
        <name>Zn(2+)</name>
        <dbReference type="ChEBI" id="CHEBI:29105"/>
    </cofactor>
    <text evidence="1">Binds 1 zinc ion per subunit.</text>
</comment>
<comment type="pathway">
    <text evidence="1">tRNA modification; tRNA-queuosine biosynthesis.</text>
</comment>
<comment type="subunit">
    <text evidence="1">Homodimer. Within each dimer, one monomer is responsible for RNA recognition and catalysis, while the other monomer binds to the replacement base PreQ1.</text>
</comment>
<comment type="similarity">
    <text evidence="1">Belongs to the queuine tRNA-ribosyltransferase family.</text>
</comment>
<gene>
    <name evidence="1" type="primary">tgt</name>
    <name type="ordered locus">TM_1561</name>
</gene>
<reference key="1">
    <citation type="journal article" date="1999" name="Nature">
        <title>Evidence for lateral gene transfer between Archaea and Bacteria from genome sequence of Thermotoga maritima.</title>
        <authorList>
            <person name="Nelson K.E."/>
            <person name="Clayton R.A."/>
            <person name="Gill S.R."/>
            <person name="Gwinn M.L."/>
            <person name="Dodson R.J."/>
            <person name="Haft D.H."/>
            <person name="Hickey E.K."/>
            <person name="Peterson J.D."/>
            <person name="Nelson W.C."/>
            <person name="Ketchum K.A."/>
            <person name="McDonald L.A."/>
            <person name="Utterback T.R."/>
            <person name="Malek J.A."/>
            <person name="Linher K.D."/>
            <person name="Garrett M.M."/>
            <person name="Stewart A.M."/>
            <person name="Cotton M.D."/>
            <person name="Pratt M.S."/>
            <person name="Phillips C.A."/>
            <person name="Richardson D.L."/>
            <person name="Heidelberg J.F."/>
            <person name="Sutton G.G."/>
            <person name="Fleischmann R.D."/>
            <person name="Eisen J.A."/>
            <person name="White O."/>
            <person name="Salzberg S.L."/>
            <person name="Smith H.O."/>
            <person name="Venter J.C."/>
            <person name="Fraser C.M."/>
        </authorList>
    </citation>
    <scope>NUCLEOTIDE SEQUENCE [LARGE SCALE GENOMIC DNA]</scope>
    <source>
        <strain>ATCC 43589 / DSM 3109 / JCM 10099 / NBRC 100826 / MSB8</strain>
    </source>
</reference>
<reference key="2">
    <citation type="submission" date="2005-08" db="PDB data bank">
        <title>Crystal structure of queuine tRNA-ribosyltransferase (EC 2.4.2.29) (tRNA-guanine (tm1561) from Thermotoga maritima at 1.90 A resolution.</title>
        <authorList>
            <consortium name="Joint Center for Structural Genomics (JCSG)"/>
        </authorList>
    </citation>
    <scope>X-RAY CRYSTALLOGRAPHY (1.90 ANGSTROMS) IN COMPLEX WITH ZINC</scope>
</reference>
<feature type="chain" id="PRO_0000135545" description="Queuine tRNA-ribosyltransferase">
    <location>
        <begin position="1"/>
        <end position="369"/>
    </location>
</feature>
<feature type="region of interest" description="RNA binding" evidence="1">
    <location>
        <begin position="242"/>
        <end position="248"/>
    </location>
</feature>
<feature type="region of interest" description="RNA binding; important for wobble base 34 recognition" evidence="1">
    <location>
        <begin position="266"/>
        <end position="270"/>
    </location>
</feature>
<feature type="active site" description="Proton acceptor" evidence="1">
    <location>
        <position position="89"/>
    </location>
</feature>
<feature type="active site" description="Nucleophile" evidence="1">
    <location>
        <position position="261"/>
    </location>
</feature>
<feature type="binding site" evidence="1">
    <location>
        <begin position="89"/>
        <end position="93"/>
    </location>
    <ligand>
        <name>substrate</name>
    </ligand>
</feature>
<feature type="binding site" evidence="1">
    <location>
        <position position="142"/>
    </location>
    <ligand>
        <name>substrate</name>
    </ligand>
</feature>
<feature type="binding site" evidence="1">
    <location>
        <position position="184"/>
    </location>
    <ligand>
        <name>substrate</name>
    </ligand>
</feature>
<feature type="binding site" evidence="1">
    <location>
        <position position="211"/>
    </location>
    <ligand>
        <name>substrate</name>
    </ligand>
</feature>
<feature type="binding site" evidence="1 2">
    <location>
        <position position="299"/>
    </location>
    <ligand>
        <name>Zn(2+)</name>
        <dbReference type="ChEBI" id="CHEBI:29105"/>
    </ligand>
</feature>
<feature type="binding site" evidence="1 2">
    <location>
        <position position="301"/>
    </location>
    <ligand>
        <name>Zn(2+)</name>
        <dbReference type="ChEBI" id="CHEBI:29105"/>
    </ligand>
</feature>
<feature type="binding site" evidence="1 2">
    <location>
        <position position="304"/>
    </location>
    <ligand>
        <name>Zn(2+)</name>
        <dbReference type="ChEBI" id="CHEBI:29105"/>
    </ligand>
</feature>
<feature type="binding site" evidence="1 2">
    <location>
        <position position="330"/>
    </location>
    <ligand>
        <name>Zn(2+)</name>
        <dbReference type="ChEBI" id="CHEBI:29105"/>
    </ligand>
</feature>
<feature type="strand" evidence="3">
    <location>
        <begin position="2"/>
        <end position="9"/>
    </location>
</feature>
<feature type="strand" evidence="3">
    <location>
        <begin position="12"/>
        <end position="19"/>
    </location>
</feature>
<feature type="strand" evidence="3">
    <location>
        <begin position="22"/>
        <end position="37"/>
    </location>
</feature>
<feature type="helix" evidence="3">
    <location>
        <begin position="43"/>
        <end position="49"/>
    </location>
</feature>
<feature type="strand" evidence="3">
    <location>
        <begin position="54"/>
        <end position="56"/>
    </location>
</feature>
<feature type="helix" evidence="3">
    <location>
        <begin position="59"/>
        <end position="63"/>
    </location>
</feature>
<feature type="helix" evidence="3">
    <location>
        <begin position="67"/>
        <end position="72"/>
    </location>
</feature>
<feature type="helix" evidence="3">
    <location>
        <begin position="76"/>
        <end position="80"/>
    </location>
</feature>
<feature type="strand" evidence="3">
    <location>
        <begin position="86"/>
        <end position="88"/>
    </location>
</feature>
<feature type="helix" evidence="3">
    <location>
        <begin position="92"/>
        <end position="96"/>
    </location>
</feature>
<feature type="strand" evidence="3">
    <location>
        <begin position="108"/>
        <end position="111"/>
    </location>
</feature>
<feature type="turn" evidence="3">
    <location>
        <begin position="113"/>
        <end position="115"/>
    </location>
</feature>
<feature type="strand" evidence="3">
    <location>
        <begin position="118"/>
        <end position="121"/>
    </location>
</feature>
<feature type="helix" evidence="3">
    <location>
        <begin position="123"/>
        <end position="133"/>
    </location>
</feature>
<feature type="strand" evidence="3">
    <location>
        <begin position="136"/>
        <end position="139"/>
    </location>
</feature>
<feature type="helix" evidence="3">
    <location>
        <begin position="151"/>
        <end position="171"/>
    </location>
</feature>
<feature type="strand" evidence="3">
    <location>
        <begin position="178"/>
        <end position="183"/>
    </location>
</feature>
<feature type="helix" evidence="3">
    <location>
        <begin position="189"/>
        <end position="200"/>
    </location>
</feature>
<feature type="strand" evidence="3">
    <location>
        <begin position="205"/>
        <end position="209"/>
    </location>
</feature>
<feature type="strand" evidence="3">
    <location>
        <begin position="213"/>
        <end position="216"/>
    </location>
</feature>
<feature type="helix" evidence="3">
    <location>
        <begin position="218"/>
        <end position="229"/>
    </location>
</feature>
<feature type="strand" evidence="3">
    <location>
        <begin position="238"/>
        <end position="240"/>
    </location>
</feature>
<feature type="helix" evidence="3">
    <location>
        <begin position="246"/>
        <end position="253"/>
    </location>
</feature>
<feature type="turn" evidence="3">
    <location>
        <begin position="254"/>
        <end position="256"/>
    </location>
</feature>
<feature type="strand" evidence="3">
    <location>
        <begin position="259"/>
        <end position="263"/>
    </location>
</feature>
<feature type="helix" evidence="3">
    <location>
        <begin position="264"/>
        <end position="270"/>
    </location>
</feature>
<feature type="strand" evidence="3">
    <location>
        <begin position="273"/>
        <end position="276"/>
    </location>
</feature>
<feature type="strand" evidence="3">
    <location>
        <begin position="279"/>
        <end position="282"/>
    </location>
</feature>
<feature type="helix" evidence="3">
    <location>
        <begin position="286"/>
        <end position="288"/>
    </location>
</feature>
<feature type="helix" evidence="3">
    <location>
        <begin position="302"/>
        <end position="306"/>
    </location>
</feature>
<feature type="helix" evidence="3">
    <location>
        <begin position="309"/>
        <end position="317"/>
    </location>
</feature>
<feature type="helix" evidence="3">
    <location>
        <begin position="321"/>
        <end position="347"/>
    </location>
</feature>
<feature type="helix" evidence="3">
    <location>
        <begin position="351"/>
        <end position="361"/>
    </location>
</feature>
<dbReference type="EC" id="2.4.2.29" evidence="1"/>
<dbReference type="EMBL" id="AE000512">
    <property type="protein sequence ID" value="AAD36627.1"/>
    <property type="molecule type" value="Genomic_DNA"/>
</dbReference>
<dbReference type="PIR" id="D72240">
    <property type="entry name" value="D72240"/>
</dbReference>
<dbReference type="RefSeq" id="NP_229361.1">
    <property type="nucleotide sequence ID" value="NC_000853.1"/>
</dbReference>
<dbReference type="RefSeq" id="WP_004081969.1">
    <property type="nucleotide sequence ID" value="NZ_CP011107.1"/>
</dbReference>
<dbReference type="PDB" id="2ASH">
    <property type="method" value="X-ray"/>
    <property type="resolution" value="1.90 A"/>
    <property type="chains" value="A/B/C/D=1-369"/>
</dbReference>
<dbReference type="PDBsum" id="2ASH"/>
<dbReference type="SMR" id="Q9X1P7"/>
<dbReference type="FunCoup" id="Q9X1P7">
    <property type="interactions" value="387"/>
</dbReference>
<dbReference type="STRING" id="243274.TM_1561"/>
<dbReference type="PaxDb" id="243274-THEMA_06475"/>
<dbReference type="EnsemblBacteria" id="AAD36627">
    <property type="protein sequence ID" value="AAD36627"/>
    <property type="gene ID" value="TM_1561"/>
</dbReference>
<dbReference type="KEGG" id="tma:TM1561"/>
<dbReference type="KEGG" id="tmi:THEMA_06475"/>
<dbReference type="KEGG" id="tmw:THMA_1596"/>
<dbReference type="PATRIC" id="fig|243274.18.peg.1249"/>
<dbReference type="eggNOG" id="COG0343">
    <property type="taxonomic scope" value="Bacteria"/>
</dbReference>
<dbReference type="InParanoid" id="Q9X1P7"/>
<dbReference type="OrthoDB" id="9805417at2"/>
<dbReference type="UniPathway" id="UPA00392"/>
<dbReference type="EvolutionaryTrace" id="Q9X1P7"/>
<dbReference type="Proteomes" id="UP000008183">
    <property type="component" value="Chromosome"/>
</dbReference>
<dbReference type="GO" id="GO:0005737">
    <property type="term" value="C:cytoplasm"/>
    <property type="evidence" value="ECO:0000318"/>
    <property type="project" value="GO_Central"/>
</dbReference>
<dbReference type="GO" id="GO:0005829">
    <property type="term" value="C:cytosol"/>
    <property type="evidence" value="ECO:0000318"/>
    <property type="project" value="GO_Central"/>
</dbReference>
<dbReference type="GO" id="GO:0046872">
    <property type="term" value="F:metal ion binding"/>
    <property type="evidence" value="ECO:0007669"/>
    <property type="project" value="UniProtKB-KW"/>
</dbReference>
<dbReference type="GO" id="GO:0008479">
    <property type="term" value="F:tRNA-guanosine(34) queuine transglycosylase activity"/>
    <property type="evidence" value="ECO:0007669"/>
    <property type="project" value="UniProtKB-UniRule"/>
</dbReference>
<dbReference type="GO" id="GO:0008616">
    <property type="term" value="P:queuosine biosynthetic process"/>
    <property type="evidence" value="ECO:0000318"/>
    <property type="project" value="GO_Central"/>
</dbReference>
<dbReference type="GO" id="GO:0002099">
    <property type="term" value="P:tRNA wobble guanine modification"/>
    <property type="evidence" value="ECO:0000318"/>
    <property type="project" value="GO_Central"/>
</dbReference>
<dbReference type="GO" id="GO:0101030">
    <property type="term" value="P:tRNA-guanine transglycosylation"/>
    <property type="evidence" value="ECO:0007669"/>
    <property type="project" value="InterPro"/>
</dbReference>
<dbReference type="FunFam" id="3.20.20.105:FF:000001">
    <property type="entry name" value="Queuine tRNA-ribosyltransferase"/>
    <property type="match status" value="1"/>
</dbReference>
<dbReference type="Gene3D" id="3.20.20.105">
    <property type="entry name" value="Queuine tRNA-ribosyltransferase-like"/>
    <property type="match status" value="1"/>
</dbReference>
<dbReference type="HAMAP" id="MF_00168">
    <property type="entry name" value="Q_tRNA_Tgt"/>
    <property type="match status" value="1"/>
</dbReference>
<dbReference type="InterPro" id="IPR050076">
    <property type="entry name" value="ArchSynthase1/Queuine_TRR"/>
</dbReference>
<dbReference type="InterPro" id="IPR004803">
    <property type="entry name" value="TGT"/>
</dbReference>
<dbReference type="InterPro" id="IPR036511">
    <property type="entry name" value="TGT-like_sf"/>
</dbReference>
<dbReference type="InterPro" id="IPR002616">
    <property type="entry name" value="tRNA_ribo_trans-like"/>
</dbReference>
<dbReference type="NCBIfam" id="TIGR00430">
    <property type="entry name" value="Q_tRNA_tgt"/>
    <property type="match status" value="1"/>
</dbReference>
<dbReference type="NCBIfam" id="TIGR00449">
    <property type="entry name" value="tgt_general"/>
    <property type="match status" value="1"/>
</dbReference>
<dbReference type="PANTHER" id="PTHR46499">
    <property type="entry name" value="QUEUINE TRNA-RIBOSYLTRANSFERASE"/>
    <property type="match status" value="1"/>
</dbReference>
<dbReference type="PANTHER" id="PTHR46499:SF1">
    <property type="entry name" value="QUEUINE TRNA-RIBOSYLTRANSFERASE"/>
    <property type="match status" value="1"/>
</dbReference>
<dbReference type="Pfam" id="PF01702">
    <property type="entry name" value="TGT"/>
    <property type="match status" value="1"/>
</dbReference>
<dbReference type="SUPFAM" id="SSF51713">
    <property type="entry name" value="tRNA-guanine transglycosylase"/>
    <property type="match status" value="1"/>
</dbReference>
<organism>
    <name type="scientific">Thermotoga maritima (strain ATCC 43589 / DSM 3109 / JCM 10099 / NBRC 100826 / MSB8)</name>
    <dbReference type="NCBI Taxonomy" id="243274"/>
    <lineage>
        <taxon>Bacteria</taxon>
        <taxon>Thermotogati</taxon>
        <taxon>Thermotogota</taxon>
        <taxon>Thermotogae</taxon>
        <taxon>Thermotogales</taxon>
        <taxon>Thermotogaceae</taxon>
        <taxon>Thermotoga</taxon>
    </lineage>
</organism>
<evidence type="ECO:0000255" key="1">
    <source>
        <dbReference type="HAMAP-Rule" id="MF_00168"/>
    </source>
</evidence>
<evidence type="ECO:0000269" key="2">
    <source ref="2"/>
</evidence>
<evidence type="ECO:0007829" key="3">
    <source>
        <dbReference type="PDB" id="2ASH"/>
    </source>
</evidence>
<sequence length="369" mass="41429">MEFEVKKTFGKARLGVMKLHHGAVETPVFMPVGTNASVKLLTPRDLEEAGAEIILSNTFHLMLKPGVEIIKLHRGLHNFMGWKRPILTDSGGFQVFSLPKIRIDDEGVVFRSPIDGSKVFLNPEISMEVQIALGSDICMVFDHCPVPDADYEEVKEATERTYRWALRSKKAFKTENQALFGIVQGGIYPDLRRESALQLTSIGFDGYAIGGLSIGEERSLTLEMTEVTVEFLPEDKPRYFMGGGSPELILELVDRGVDMFDSVFPTRIARHGTALTWNGKLNLKASYNKRSLEPVDERCGCYTCKNFTRSYIHHLFDRGEVLGQILLTIHNINFMISLMKEVRRSIESGTFKELKSKVVEVYSSGGVNV</sequence>